<dbReference type="EMBL" id="OK376600">
    <property type="protein sequence ID" value="UVC57618.1"/>
    <property type="molecule type" value="mRNA"/>
</dbReference>
<dbReference type="GO" id="GO:0005576">
    <property type="term" value="C:extracellular region"/>
    <property type="evidence" value="ECO:0007669"/>
    <property type="project" value="UniProtKB-SubCell"/>
</dbReference>
<dbReference type="GO" id="GO:0017080">
    <property type="term" value="F:sodium channel regulator activity"/>
    <property type="evidence" value="ECO:0007669"/>
    <property type="project" value="UniProtKB-KW"/>
</dbReference>
<dbReference type="GO" id="GO:0090729">
    <property type="term" value="F:toxin activity"/>
    <property type="evidence" value="ECO:0007669"/>
    <property type="project" value="UniProtKB-KW"/>
</dbReference>
<dbReference type="GO" id="GO:0006952">
    <property type="term" value="P:defense response"/>
    <property type="evidence" value="ECO:0007669"/>
    <property type="project" value="UniProtKB-KW"/>
</dbReference>
<proteinExistence type="evidence at protein level"/>
<keyword id="KW-0903">Direct protein sequencing</keyword>
<keyword id="KW-1015">Disulfide bond</keyword>
<keyword id="KW-0872">Ion channel impairing toxin</keyword>
<keyword id="KW-0960">Knottin</keyword>
<keyword id="KW-0528">Neurotoxin</keyword>
<keyword id="KW-0611">Plant defense</keyword>
<keyword id="KW-0964">Secreted</keyword>
<keyword id="KW-0732">Signal</keyword>
<keyword id="KW-0800">Toxin</keyword>
<keyword id="KW-0738">Voltage-gated sodium channel impairing toxin</keyword>
<accession>A0A976XJR9</accession>
<evidence type="ECO:0000255" key="1"/>
<evidence type="ECO:0000269" key="2">
    <source>
    </source>
</evidence>
<evidence type="ECO:0000303" key="3">
    <source>
    </source>
</evidence>
<evidence type="ECO:0000305" key="4"/>
<evidence type="ECO:0000305" key="5">
    <source>
    </source>
</evidence>
<evidence type="ECO:0000312" key="6">
    <source>
        <dbReference type="EMBL" id="UVC57618.1"/>
    </source>
</evidence>
<protein>
    <recommendedName>
        <fullName evidence="3">Beta/delta-urticatoxin-Uf2a</fullName>
        <shortName evidence="3">Beta/delta-Uf2a</shortName>
    </recommendedName>
</protein>
<reference evidence="6" key="1">
    <citation type="journal article" date="2022" name="J. Biol. Chem.">
        <title>Neurotoxic and cytotoxic peptides underlie the painful stings of the tree nettle Urtica ferox.</title>
        <authorList>
            <person name="Xie J."/>
            <person name="Robinson S.D."/>
            <person name="Gilding E.K."/>
            <person name="Jami S."/>
            <person name="Deuis J.R."/>
            <person name="Rehm F.B.H."/>
            <person name="Yap K."/>
            <person name="Ragnarsson L."/>
            <person name="Chan L.Y."/>
            <person name="Hamilton B.R."/>
            <person name="Harvey P.J."/>
            <person name="Craik D.J."/>
            <person name="Vetter I."/>
            <person name="Durek T."/>
        </authorList>
    </citation>
    <scope>NUCLEOTIDE SEQUENCE [MRNA]</scope>
    <scope>PROTEIN SEQUENCE OF 83-110 AND 119-143</scope>
    <scope>FUNCTION</scope>
    <scope>TISSUE SPECIFICITY</scope>
    <scope>MASS SPECTROMETRY</scope>
</reference>
<name>NAVTA_URTFR</name>
<comment type="function">
    <text evidence="2">Plant defense neurotoxin that causes pain and systemic symptoms in mammals via modulation of voltage-gated sodium channels (Nav). Potent modulator of human Nav1.5/SCN5A (EC(50)=55 nM), Nav1.6/SCN8A (EC(50)=0.86 nM), and Nav1.7/SCN9A (EC(50)=208 nM), where it shifts the activation threshold to more negative potentials and delays fast inactivation. Also shifts the voltage-dependence of steady-state fast inactivation of Nav1.6/SCN8A, but not that of Nav1.5/SCN5A or Nav1.7/SCN9A. On Nav1.7/SCN9A, principally acts by binding to extracellular loops of domain IV (Nav site 3). Does not affect current response of the tetrodotoxin (TTX)-resistant Nav1.8/SCN10A sodium channel. In vivo, intraplantar injection into mice causes numerous dose-dependent, immediate, and long-lasting spontaneous pain behaviors, while no swelling is observed in the injected paw. At the highest doses tested, systemic symptoms including hypokinesia and hypersalivation are observed.</text>
</comment>
<comment type="subcellular location">
    <subcellularLocation>
        <location evidence="5">Secreted</location>
    </subcellularLocation>
</comment>
<comment type="tissue specificity">
    <text evidence="2">Expressed in trichomes, that are stiff epidermal hairs located on the surface of petioles and leaves.</text>
</comment>
<comment type="domain">
    <text evidence="4">The presence of 'disulfide through disulfide knots' structurally defines this protein as a knottin. This toxin contains 2 'disulfide through disulfide knots'.</text>
</comment>
<comment type="mass spectrometry" mass="6720.79" method="MALDI" evidence="2">
    <text>Monoisotopic mass.</text>
</comment>
<comment type="similarity">
    <text evidence="4">Belongs to the urticatoxin-2 family.</text>
</comment>
<sequence length="143" mass="15210">MGAIVLVALMALVASSSAFSDIEHNIMKLEGENIISSSSTPNDDQSSFSDGTSDMVESLFLNSGNRNLVLMMLSGRPQPNGRCIGDAQPCGFLVSDKGCCDPNYCSEYSKGKCICVPKGQPCGLLHFCCLDLTCDGYFNGTCK</sequence>
<feature type="signal peptide" evidence="1">
    <location>
        <begin position="1"/>
        <end position="18"/>
    </location>
</feature>
<feature type="propeptide" id="PRO_0000459313" evidence="5">
    <location>
        <begin position="19"/>
        <end position="80"/>
    </location>
</feature>
<feature type="chain" id="PRO_5037285268" description="Beta/delta-urticatoxin-Uf2a" evidence="2">
    <location>
        <begin position="81"/>
        <end position="143"/>
    </location>
</feature>
<feature type="disulfide bond" evidence="4">
    <location>
        <begin position="83"/>
        <end position="100"/>
    </location>
</feature>
<feature type="disulfide bond" evidence="4">
    <location>
        <begin position="90"/>
        <end position="105"/>
    </location>
</feature>
<feature type="disulfide bond" evidence="4">
    <location>
        <begin position="99"/>
        <end position="113"/>
    </location>
</feature>
<feature type="disulfide bond" evidence="4">
    <location>
        <begin position="115"/>
        <end position="129"/>
    </location>
</feature>
<feature type="disulfide bond" evidence="4">
    <location>
        <begin position="122"/>
        <end position="134"/>
    </location>
</feature>
<feature type="disulfide bond" evidence="4">
    <location>
        <begin position="128"/>
        <end position="142"/>
    </location>
</feature>
<organism>
    <name type="scientific">Urtica ferox</name>
    <name type="common">Tree nettle</name>
    <dbReference type="NCBI Taxonomy" id="1435581"/>
    <lineage>
        <taxon>Eukaryota</taxon>
        <taxon>Viridiplantae</taxon>
        <taxon>Streptophyta</taxon>
        <taxon>Embryophyta</taxon>
        <taxon>Tracheophyta</taxon>
        <taxon>Spermatophyta</taxon>
        <taxon>Magnoliopsida</taxon>
        <taxon>eudicotyledons</taxon>
        <taxon>Gunneridae</taxon>
        <taxon>Pentapetalae</taxon>
        <taxon>rosids</taxon>
        <taxon>fabids</taxon>
        <taxon>Rosales</taxon>
        <taxon>Urticaceae</taxon>
        <taxon>Urtica</taxon>
    </lineage>
</organism>